<feature type="chain" id="PRO_1000060255" description="ATP-dependent Clp protease proteolytic subunit">
    <location>
        <begin position="1"/>
        <end position="194"/>
    </location>
</feature>
<feature type="active site" description="Nucleophile" evidence="1">
    <location>
        <position position="98"/>
    </location>
</feature>
<feature type="active site" evidence="1">
    <location>
        <position position="123"/>
    </location>
</feature>
<dbReference type="EC" id="3.4.21.92" evidence="1"/>
<dbReference type="EMBL" id="CP000724">
    <property type="protein sequence ID" value="ABR47279.1"/>
    <property type="molecule type" value="Genomic_DNA"/>
</dbReference>
<dbReference type="RefSeq" id="WP_012062321.1">
    <property type="nucleotide sequence ID" value="NC_009633.1"/>
</dbReference>
<dbReference type="SMR" id="A6TM61"/>
<dbReference type="STRING" id="293826.Amet_1067"/>
<dbReference type="MEROPS" id="S14.001"/>
<dbReference type="KEGG" id="amt:Amet_1067"/>
<dbReference type="eggNOG" id="COG0740">
    <property type="taxonomic scope" value="Bacteria"/>
</dbReference>
<dbReference type="HOGENOM" id="CLU_058707_3_2_9"/>
<dbReference type="OrthoDB" id="9802800at2"/>
<dbReference type="Proteomes" id="UP000001572">
    <property type="component" value="Chromosome"/>
</dbReference>
<dbReference type="GO" id="GO:0005737">
    <property type="term" value="C:cytoplasm"/>
    <property type="evidence" value="ECO:0007669"/>
    <property type="project" value="UniProtKB-SubCell"/>
</dbReference>
<dbReference type="GO" id="GO:0009368">
    <property type="term" value="C:endopeptidase Clp complex"/>
    <property type="evidence" value="ECO:0007669"/>
    <property type="project" value="TreeGrafter"/>
</dbReference>
<dbReference type="GO" id="GO:0004176">
    <property type="term" value="F:ATP-dependent peptidase activity"/>
    <property type="evidence" value="ECO:0007669"/>
    <property type="project" value="InterPro"/>
</dbReference>
<dbReference type="GO" id="GO:0051117">
    <property type="term" value="F:ATPase binding"/>
    <property type="evidence" value="ECO:0007669"/>
    <property type="project" value="TreeGrafter"/>
</dbReference>
<dbReference type="GO" id="GO:0004252">
    <property type="term" value="F:serine-type endopeptidase activity"/>
    <property type="evidence" value="ECO:0007669"/>
    <property type="project" value="UniProtKB-UniRule"/>
</dbReference>
<dbReference type="GO" id="GO:0006515">
    <property type="term" value="P:protein quality control for misfolded or incompletely synthesized proteins"/>
    <property type="evidence" value="ECO:0007669"/>
    <property type="project" value="TreeGrafter"/>
</dbReference>
<dbReference type="CDD" id="cd07017">
    <property type="entry name" value="S14_ClpP_2"/>
    <property type="match status" value="1"/>
</dbReference>
<dbReference type="FunFam" id="3.90.226.10:FF:000001">
    <property type="entry name" value="ATP-dependent Clp protease proteolytic subunit"/>
    <property type="match status" value="1"/>
</dbReference>
<dbReference type="Gene3D" id="3.90.226.10">
    <property type="entry name" value="2-enoyl-CoA Hydratase, Chain A, domain 1"/>
    <property type="match status" value="1"/>
</dbReference>
<dbReference type="HAMAP" id="MF_00444">
    <property type="entry name" value="ClpP"/>
    <property type="match status" value="1"/>
</dbReference>
<dbReference type="InterPro" id="IPR001907">
    <property type="entry name" value="ClpP"/>
</dbReference>
<dbReference type="InterPro" id="IPR029045">
    <property type="entry name" value="ClpP/crotonase-like_dom_sf"/>
</dbReference>
<dbReference type="InterPro" id="IPR023562">
    <property type="entry name" value="ClpP/TepA"/>
</dbReference>
<dbReference type="InterPro" id="IPR033135">
    <property type="entry name" value="ClpP_His_AS"/>
</dbReference>
<dbReference type="InterPro" id="IPR018215">
    <property type="entry name" value="ClpP_Ser_AS"/>
</dbReference>
<dbReference type="NCBIfam" id="TIGR00493">
    <property type="entry name" value="clpP"/>
    <property type="match status" value="1"/>
</dbReference>
<dbReference type="NCBIfam" id="NF001368">
    <property type="entry name" value="PRK00277.1"/>
    <property type="match status" value="1"/>
</dbReference>
<dbReference type="NCBIfam" id="NF009205">
    <property type="entry name" value="PRK12553.1"/>
    <property type="match status" value="1"/>
</dbReference>
<dbReference type="PANTHER" id="PTHR10381">
    <property type="entry name" value="ATP-DEPENDENT CLP PROTEASE PROTEOLYTIC SUBUNIT"/>
    <property type="match status" value="1"/>
</dbReference>
<dbReference type="PANTHER" id="PTHR10381:SF70">
    <property type="entry name" value="ATP-DEPENDENT CLP PROTEASE PROTEOLYTIC SUBUNIT"/>
    <property type="match status" value="1"/>
</dbReference>
<dbReference type="Pfam" id="PF00574">
    <property type="entry name" value="CLP_protease"/>
    <property type="match status" value="1"/>
</dbReference>
<dbReference type="PRINTS" id="PR00127">
    <property type="entry name" value="CLPPROTEASEP"/>
</dbReference>
<dbReference type="SUPFAM" id="SSF52096">
    <property type="entry name" value="ClpP/crotonase"/>
    <property type="match status" value="1"/>
</dbReference>
<dbReference type="PROSITE" id="PS00382">
    <property type="entry name" value="CLP_PROTEASE_HIS"/>
    <property type="match status" value="1"/>
</dbReference>
<dbReference type="PROSITE" id="PS00381">
    <property type="entry name" value="CLP_PROTEASE_SER"/>
    <property type="match status" value="1"/>
</dbReference>
<comment type="function">
    <text evidence="1">Cleaves peptides in various proteins in a process that requires ATP hydrolysis. Has a chymotrypsin-like activity. Plays a major role in the degradation of misfolded proteins.</text>
</comment>
<comment type="catalytic activity">
    <reaction evidence="1">
        <text>Hydrolysis of proteins to small peptides in the presence of ATP and magnesium. alpha-casein is the usual test substrate. In the absence of ATP, only oligopeptides shorter than five residues are hydrolyzed (such as succinyl-Leu-Tyr-|-NHMec, and Leu-Tyr-Leu-|-Tyr-Trp, in which cleavage of the -Tyr-|-Leu- and -Tyr-|-Trp bonds also occurs).</text>
        <dbReference type="EC" id="3.4.21.92"/>
    </reaction>
</comment>
<comment type="subunit">
    <text evidence="1">Fourteen ClpP subunits assemble into 2 heptameric rings which stack back to back to give a disk-like structure with a central cavity, resembling the structure of eukaryotic proteasomes.</text>
</comment>
<comment type="subcellular location">
    <subcellularLocation>
        <location evidence="1">Cytoplasm</location>
    </subcellularLocation>
</comment>
<comment type="similarity">
    <text evidence="1">Belongs to the peptidase S14 family.</text>
</comment>
<accession>A6TM61</accession>
<name>CLPP_ALKMQ</name>
<proteinExistence type="inferred from homology"/>
<evidence type="ECO:0000255" key="1">
    <source>
        <dbReference type="HAMAP-Rule" id="MF_00444"/>
    </source>
</evidence>
<reference key="1">
    <citation type="journal article" date="2016" name="Genome Announc.">
        <title>Complete genome sequence of Alkaliphilus metalliredigens strain QYMF, an alkaliphilic and metal-reducing bacterium isolated from borax-contaminated leachate ponds.</title>
        <authorList>
            <person name="Hwang C."/>
            <person name="Copeland A."/>
            <person name="Lucas S."/>
            <person name="Lapidus A."/>
            <person name="Barry K."/>
            <person name="Detter J.C."/>
            <person name="Glavina Del Rio T."/>
            <person name="Hammon N."/>
            <person name="Israni S."/>
            <person name="Dalin E."/>
            <person name="Tice H."/>
            <person name="Pitluck S."/>
            <person name="Chertkov O."/>
            <person name="Brettin T."/>
            <person name="Bruce D."/>
            <person name="Han C."/>
            <person name="Schmutz J."/>
            <person name="Larimer F."/>
            <person name="Land M.L."/>
            <person name="Hauser L."/>
            <person name="Kyrpides N."/>
            <person name="Mikhailova N."/>
            <person name="Ye Q."/>
            <person name="Zhou J."/>
            <person name="Richardson P."/>
            <person name="Fields M.W."/>
        </authorList>
    </citation>
    <scope>NUCLEOTIDE SEQUENCE [LARGE SCALE GENOMIC DNA]</scope>
    <source>
        <strain>QYMF</strain>
    </source>
</reference>
<organism>
    <name type="scientific">Alkaliphilus metalliredigens (strain QYMF)</name>
    <dbReference type="NCBI Taxonomy" id="293826"/>
    <lineage>
        <taxon>Bacteria</taxon>
        <taxon>Bacillati</taxon>
        <taxon>Bacillota</taxon>
        <taxon>Clostridia</taxon>
        <taxon>Peptostreptococcales</taxon>
        <taxon>Natronincolaceae</taxon>
        <taxon>Alkaliphilus</taxon>
    </lineage>
</organism>
<sequence>MALVPVVVEQTSRGERSYDIFSRLLKERIIFLGDEINDVTASLLVAQLLFLEAEDPDKDIQIYINSPGGSITAGMAIYDTMNYIKPDVSTICVGMAASMGAFLLAAGAKGKRFALPNAEVMIHQPLGGTRGQAEDIRIHAERIVKLRDTLNKILVERTGQPLERVQKDTDRDFFMEAKEAKEYGIIDEVISSRK</sequence>
<gene>
    <name evidence="1" type="primary">clpP</name>
    <name type="ordered locus">Amet_1067</name>
</gene>
<protein>
    <recommendedName>
        <fullName evidence="1">ATP-dependent Clp protease proteolytic subunit</fullName>
        <ecNumber evidence="1">3.4.21.92</ecNumber>
    </recommendedName>
    <alternativeName>
        <fullName evidence="1">Endopeptidase Clp</fullName>
    </alternativeName>
</protein>
<keyword id="KW-0963">Cytoplasm</keyword>
<keyword id="KW-0378">Hydrolase</keyword>
<keyword id="KW-0645">Protease</keyword>
<keyword id="KW-1185">Reference proteome</keyword>
<keyword id="KW-0720">Serine protease</keyword>